<name>AROB_LEPIN</name>
<sequence length="361" mass="39731">MSLIETVPVNTEHKSVPVHLHSNLSGLSEEIAKLPGVTSVFLITEKSIHSIYSKYLERELSSLPIKTIYIKGGEKSKHINRTGEVYNQLIEYGADRKSLILAFGGGVVGDFAGFIASTYLRGIRFVQIPTTLLACVDSSVGGKVAVNADFGKNMIGSFYQPEFVFAPLSVLSTLPDREWKCGQAEIIKHSLLSGGEYWEKVKTHSFKDLNVDSTILPYLIAESVRFKANVVSSDEKETGLRKILNLGHTTAHAIESVTKYKKYSHGEAVAIGLVTALLLSEQHSELDPVTTKETIESLKNYGLPFQTKLKSKQLAKHMLHDKKNVGGSIRFVLLKSPGSPIFDIPINSEDIILAIHKQKGI</sequence>
<protein>
    <recommendedName>
        <fullName evidence="1">3-dehydroquinate synthase</fullName>
        <shortName evidence="1">DHQS</shortName>
        <ecNumber evidence="1">4.2.3.4</ecNumber>
    </recommendedName>
</protein>
<comment type="function">
    <text evidence="1">Catalyzes the conversion of 3-deoxy-D-arabino-heptulosonate 7-phosphate (DAHP) to dehydroquinate (DHQ).</text>
</comment>
<comment type="catalytic activity">
    <reaction evidence="1">
        <text>7-phospho-2-dehydro-3-deoxy-D-arabino-heptonate = 3-dehydroquinate + phosphate</text>
        <dbReference type="Rhea" id="RHEA:21968"/>
        <dbReference type="ChEBI" id="CHEBI:32364"/>
        <dbReference type="ChEBI" id="CHEBI:43474"/>
        <dbReference type="ChEBI" id="CHEBI:58394"/>
        <dbReference type="EC" id="4.2.3.4"/>
    </reaction>
</comment>
<comment type="cofactor">
    <cofactor evidence="1">
        <name>NAD(+)</name>
        <dbReference type="ChEBI" id="CHEBI:57540"/>
    </cofactor>
</comment>
<comment type="cofactor">
    <cofactor evidence="1">
        <name>Co(2+)</name>
        <dbReference type="ChEBI" id="CHEBI:48828"/>
    </cofactor>
    <cofactor evidence="1">
        <name>Zn(2+)</name>
        <dbReference type="ChEBI" id="CHEBI:29105"/>
    </cofactor>
    <text evidence="1">Binds 1 divalent metal cation per subunit. Can use either Co(2+) or Zn(2+).</text>
</comment>
<comment type="pathway">
    <text evidence="1">Metabolic intermediate biosynthesis; chorismate biosynthesis; chorismate from D-erythrose 4-phosphate and phosphoenolpyruvate: step 2/7.</text>
</comment>
<comment type="subcellular location">
    <subcellularLocation>
        <location evidence="1">Cytoplasm</location>
    </subcellularLocation>
</comment>
<comment type="similarity">
    <text evidence="1">Belongs to the sugar phosphate cyclases superfamily. Dehydroquinate synthase family.</text>
</comment>
<evidence type="ECO:0000255" key="1">
    <source>
        <dbReference type="HAMAP-Rule" id="MF_00110"/>
    </source>
</evidence>
<accession>Q8EXX1</accession>
<gene>
    <name evidence="1" type="primary">aroB</name>
    <name type="ordered locus">LB_086</name>
</gene>
<feature type="chain" id="PRO_0000140751" description="3-dehydroquinate synthase">
    <location>
        <begin position="1"/>
        <end position="361"/>
    </location>
</feature>
<feature type="binding site" evidence="1">
    <location>
        <begin position="106"/>
        <end position="110"/>
    </location>
    <ligand>
        <name>NAD(+)</name>
        <dbReference type="ChEBI" id="CHEBI:57540"/>
    </ligand>
</feature>
<feature type="binding site" evidence="1">
    <location>
        <begin position="130"/>
        <end position="131"/>
    </location>
    <ligand>
        <name>NAD(+)</name>
        <dbReference type="ChEBI" id="CHEBI:57540"/>
    </ligand>
</feature>
<feature type="binding site" evidence="1">
    <location>
        <position position="143"/>
    </location>
    <ligand>
        <name>NAD(+)</name>
        <dbReference type="ChEBI" id="CHEBI:57540"/>
    </ligand>
</feature>
<feature type="binding site" evidence="1">
    <location>
        <position position="152"/>
    </location>
    <ligand>
        <name>NAD(+)</name>
        <dbReference type="ChEBI" id="CHEBI:57540"/>
    </ligand>
</feature>
<feature type="binding site" evidence="1">
    <location>
        <position position="185"/>
    </location>
    <ligand>
        <name>Zn(2+)</name>
        <dbReference type="ChEBI" id="CHEBI:29105"/>
    </ligand>
</feature>
<feature type="binding site" evidence="1">
    <location>
        <position position="248"/>
    </location>
    <ligand>
        <name>Zn(2+)</name>
        <dbReference type="ChEBI" id="CHEBI:29105"/>
    </ligand>
</feature>
<feature type="binding site" evidence="1">
    <location>
        <position position="265"/>
    </location>
    <ligand>
        <name>Zn(2+)</name>
        <dbReference type="ChEBI" id="CHEBI:29105"/>
    </ligand>
</feature>
<reference key="1">
    <citation type="journal article" date="2003" name="Nature">
        <title>Unique physiological and pathogenic features of Leptospira interrogans revealed by whole-genome sequencing.</title>
        <authorList>
            <person name="Ren S.-X."/>
            <person name="Fu G."/>
            <person name="Jiang X.-G."/>
            <person name="Zeng R."/>
            <person name="Miao Y.-G."/>
            <person name="Xu H."/>
            <person name="Zhang Y.-X."/>
            <person name="Xiong H."/>
            <person name="Lu G."/>
            <person name="Lu L.-F."/>
            <person name="Jiang H.-Q."/>
            <person name="Jia J."/>
            <person name="Tu Y.-F."/>
            <person name="Jiang J.-X."/>
            <person name="Gu W.-Y."/>
            <person name="Zhang Y.-Q."/>
            <person name="Cai Z."/>
            <person name="Sheng H.-H."/>
            <person name="Yin H.-F."/>
            <person name="Zhang Y."/>
            <person name="Zhu G.-F."/>
            <person name="Wan M."/>
            <person name="Huang H.-L."/>
            <person name="Qian Z."/>
            <person name="Wang S.-Y."/>
            <person name="Ma W."/>
            <person name="Yao Z.-J."/>
            <person name="Shen Y."/>
            <person name="Qiang B.-Q."/>
            <person name="Xia Q.-C."/>
            <person name="Guo X.-K."/>
            <person name="Danchin A."/>
            <person name="Saint Girons I."/>
            <person name="Somerville R.L."/>
            <person name="Wen Y.-M."/>
            <person name="Shi M.-H."/>
            <person name="Chen Z."/>
            <person name="Xu J.-G."/>
            <person name="Zhao G.-P."/>
        </authorList>
    </citation>
    <scope>NUCLEOTIDE SEQUENCE [LARGE SCALE GENOMIC DNA]</scope>
    <source>
        <strain>56601</strain>
    </source>
</reference>
<organism>
    <name type="scientific">Leptospira interrogans serogroup Icterohaemorrhagiae serovar Lai (strain 56601)</name>
    <dbReference type="NCBI Taxonomy" id="189518"/>
    <lineage>
        <taxon>Bacteria</taxon>
        <taxon>Pseudomonadati</taxon>
        <taxon>Spirochaetota</taxon>
        <taxon>Spirochaetia</taxon>
        <taxon>Leptospirales</taxon>
        <taxon>Leptospiraceae</taxon>
        <taxon>Leptospira</taxon>
    </lineage>
</organism>
<proteinExistence type="inferred from homology"/>
<dbReference type="EC" id="4.2.3.4" evidence="1"/>
<dbReference type="EMBL" id="AE010301">
    <property type="protein sequence ID" value="AAN51645.1"/>
    <property type="molecule type" value="Genomic_DNA"/>
</dbReference>
<dbReference type="RefSeq" id="NP_714630.1">
    <property type="nucleotide sequence ID" value="NC_004343.2"/>
</dbReference>
<dbReference type="RefSeq" id="WP_000052388.1">
    <property type="nucleotide sequence ID" value="NC_004343.2"/>
</dbReference>
<dbReference type="SMR" id="Q8EXX1"/>
<dbReference type="FunCoup" id="Q8EXX1">
    <property type="interactions" value="463"/>
</dbReference>
<dbReference type="STRING" id="189518.LB_086"/>
<dbReference type="PaxDb" id="189518-LB_086"/>
<dbReference type="EnsemblBacteria" id="AAN51645">
    <property type="protein sequence ID" value="AAN51645"/>
    <property type="gene ID" value="LB_086"/>
</dbReference>
<dbReference type="GeneID" id="61141263"/>
<dbReference type="KEGG" id="lil:LB_086"/>
<dbReference type="PATRIC" id="fig|189518.3.peg.4414"/>
<dbReference type="HOGENOM" id="CLU_001201_0_2_12"/>
<dbReference type="InParanoid" id="Q8EXX1"/>
<dbReference type="OrthoDB" id="9806583at2"/>
<dbReference type="UniPathway" id="UPA00053">
    <property type="reaction ID" value="UER00085"/>
</dbReference>
<dbReference type="Proteomes" id="UP000001408">
    <property type="component" value="Chromosome II"/>
</dbReference>
<dbReference type="GO" id="GO:0005737">
    <property type="term" value="C:cytoplasm"/>
    <property type="evidence" value="ECO:0007669"/>
    <property type="project" value="UniProtKB-SubCell"/>
</dbReference>
<dbReference type="GO" id="GO:0003856">
    <property type="term" value="F:3-dehydroquinate synthase activity"/>
    <property type="evidence" value="ECO:0000318"/>
    <property type="project" value="GO_Central"/>
</dbReference>
<dbReference type="GO" id="GO:0046872">
    <property type="term" value="F:metal ion binding"/>
    <property type="evidence" value="ECO:0007669"/>
    <property type="project" value="UniProtKB-KW"/>
</dbReference>
<dbReference type="GO" id="GO:0000166">
    <property type="term" value="F:nucleotide binding"/>
    <property type="evidence" value="ECO:0007669"/>
    <property type="project" value="UniProtKB-KW"/>
</dbReference>
<dbReference type="GO" id="GO:0008652">
    <property type="term" value="P:amino acid biosynthetic process"/>
    <property type="evidence" value="ECO:0007669"/>
    <property type="project" value="UniProtKB-KW"/>
</dbReference>
<dbReference type="GO" id="GO:0009073">
    <property type="term" value="P:aromatic amino acid family biosynthetic process"/>
    <property type="evidence" value="ECO:0000318"/>
    <property type="project" value="GO_Central"/>
</dbReference>
<dbReference type="GO" id="GO:0009423">
    <property type="term" value="P:chorismate biosynthetic process"/>
    <property type="evidence" value="ECO:0007669"/>
    <property type="project" value="UniProtKB-UniRule"/>
</dbReference>
<dbReference type="CDD" id="cd08195">
    <property type="entry name" value="DHQS"/>
    <property type="match status" value="1"/>
</dbReference>
<dbReference type="FunFam" id="3.40.50.1970:FF:000007">
    <property type="entry name" value="Pentafunctional AROM polypeptide"/>
    <property type="match status" value="1"/>
</dbReference>
<dbReference type="Gene3D" id="3.40.50.1970">
    <property type="match status" value="1"/>
</dbReference>
<dbReference type="Gene3D" id="1.20.1090.10">
    <property type="entry name" value="Dehydroquinate synthase-like - alpha domain"/>
    <property type="match status" value="1"/>
</dbReference>
<dbReference type="HAMAP" id="MF_00110">
    <property type="entry name" value="DHQ_synthase"/>
    <property type="match status" value="1"/>
</dbReference>
<dbReference type="InterPro" id="IPR050071">
    <property type="entry name" value="Dehydroquinate_synthase"/>
</dbReference>
<dbReference type="InterPro" id="IPR016037">
    <property type="entry name" value="DHQ_synth_AroB"/>
</dbReference>
<dbReference type="InterPro" id="IPR030963">
    <property type="entry name" value="DHQ_synth_fam"/>
</dbReference>
<dbReference type="InterPro" id="IPR030960">
    <property type="entry name" value="DHQS/DOIS_N"/>
</dbReference>
<dbReference type="InterPro" id="IPR056179">
    <property type="entry name" value="DHQS_C"/>
</dbReference>
<dbReference type="NCBIfam" id="TIGR01357">
    <property type="entry name" value="aroB"/>
    <property type="match status" value="1"/>
</dbReference>
<dbReference type="PANTHER" id="PTHR43622">
    <property type="entry name" value="3-DEHYDROQUINATE SYNTHASE"/>
    <property type="match status" value="1"/>
</dbReference>
<dbReference type="PANTHER" id="PTHR43622:SF7">
    <property type="entry name" value="3-DEHYDROQUINATE SYNTHASE, CHLOROPLASTIC"/>
    <property type="match status" value="1"/>
</dbReference>
<dbReference type="Pfam" id="PF01761">
    <property type="entry name" value="DHQ_synthase"/>
    <property type="match status" value="1"/>
</dbReference>
<dbReference type="Pfam" id="PF24621">
    <property type="entry name" value="DHQS_C"/>
    <property type="match status" value="1"/>
</dbReference>
<dbReference type="PIRSF" id="PIRSF001455">
    <property type="entry name" value="DHQ_synth"/>
    <property type="match status" value="1"/>
</dbReference>
<dbReference type="SUPFAM" id="SSF56796">
    <property type="entry name" value="Dehydroquinate synthase-like"/>
    <property type="match status" value="1"/>
</dbReference>
<keyword id="KW-0028">Amino-acid biosynthesis</keyword>
<keyword id="KW-0057">Aromatic amino acid biosynthesis</keyword>
<keyword id="KW-0170">Cobalt</keyword>
<keyword id="KW-0963">Cytoplasm</keyword>
<keyword id="KW-0456">Lyase</keyword>
<keyword id="KW-0479">Metal-binding</keyword>
<keyword id="KW-0520">NAD</keyword>
<keyword id="KW-0547">Nucleotide-binding</keyword>
<keyword id="KW-1185">Reference proteome</keyword>
<keyword id="KW-0862">Zinc</keyword>